<sequence>MTHFIFVTGGVVSSLGKGISAASVAALLEARGLKVTMVKMDPYINVDPGTMSPFQHGEVFVTEDGAETDLDLGYYERFLRRAKMTKLNNFTSGRVYQDVLNKERRGDYLGGTVQVIPHITDNIKERVLRAGEGYDVAIVEIGGTVGDIESLPFMESVRQLMVELGHKRTMLMHLTLLPYIKSAAELKTKPTQHSVKELLSIGIQPDILICRTEYDVDADTKRKIALFTNVEARAVVVCKDAKTIYQIPRGFYEQNVDDLICERFGFTDLPEADLTDWDNVVEALLNPEYTVRVAMVGKYVELPDAYKSVNEALLHAGIKNRVKVQIDYVNAEELESQDVSILKTADAILVPGGFGERGTEGKMKAIQYARENGIPFLGICLGMQLAVIEYARHVAGMPEASSTEFNRSTKYPLIGLITEWLDERGELQQRSLESDLGGTMRLGAQKSELVEGTKTREVYGKAEITERHRHRYEMNNRFIEAIEQAGMKISGYSSAQHLVETVEIPEHPWFIAVQFHPEFTSSPRDGHPLFASFIDAAKTQHQKSK</sequence>
<comment type="function">
    <text evidence="1">Catalyzes the ATP-dependent amination of UTP to CTP with either L-glutamine or ammonia as the source of nitrogen. Regulates intracellular CTP levels through interactions with the four ribonucleotide triphosphates.</text>
</comment>
<comment type="catalytic activity">
    <reaction evidence="1">
        <text>UTP + L-glutamine + ATP + H2O = CTP + L-glutamate + ADP + phosphate + 2 H(+)</text>
        <dbReference type="Rhea" id="RHEA:26426"/>
        <dbReference type="ChEBI" id="CHEBI:15377"/>
        <dbReference type="ChEBI" id="CHEBI:15378"/>
        <dbReference type="ChEBI" id="CHEBI:29985"/>
        <dbReference type="ChEBI" id="CHEBI:30616"/>
        <dbReference type="ChEBI" id="CHEBI:37563"/>
        <dbReference type="ChEBI" id="CHEBI:43474"/>
        <dbReference type="ChEBI" id="CHEBI:46398"/>
        <dbReference type="ChEBI" id="CHEBI:58359"/>
        <dbReference type="ChEBI" id="CHEBI:456216"/>
        <dbReference type="EC" id="6.3.4.2"/>
    </reaction>
</comment>
<comment type="catalytic activity">
    <reaction evidence="1">
        <text>L-glutamine + H2O = L-glutamate + NH4(+)</text>
        <dbReference type="Rhea" id="RHEA:15889"/>
        <dbReference type="ChEBI" id="CHEBI:15377"/>
        <dbReference type="ChEBI" id="CHEBI:28938"/>
        <dbReference type="ChEBI" id="CHEBI:29985"/>
        <dbReference type="ChEBI" id="CHEBI:58359"/>
    </reaction>
</comment>
<comment type="catalytic activity">
    <reaction evidence="1">
        <text>UTP + NH4(+) + ATP = CTP + ADP + phosphate + 2 H(+)</text>
        <dbReference type="Rhea" id="RHEA:16597"/>
        <dbReference type="ChEBI" id="CHEBI:15378"/>
        <dbReference type="ChEBI" id="CHEBI:28938"/>
        <dbReference type="ChEBI" id="CHEBI:30616"/>
        <dbReference type="ChEBI" id="CHEBI:37563"/>
        <dbReference type="ChEBI" id="CHEBI:43474"/>
        <dbReference type="ChEBI" id="CHEBI:46398"/>
        <dbReference type="ChEBI" id="CHEBI:456216"/>
    </reaction>
</comment>
<comment type="activity regulation">
    <text evidence="1">Allosterically activated by GTP, when glutamine is the substrate; GTP has no effect on the reaction when ammonia is the substrate. The allosteric effector GTP functions by stabilizing the protein conformation that binds the tetrahedral intermediate(s) formed during glutamine hydrolysis. Inhibited by the product CTP, via allosteric rather than competitive inhibition.</text>
</comment>
<comment type="pathway">
    <text evidence="1">Pyrimidine metabolism; CTP biosynthesis via de novo pathway; CTP from UDP: step 2/2.</text>
</comment>
<comment type="subunit">
    <text evidence="1">Homotetramer.</text>
</comment>
<comment type="miscellaneous">
    <text evidence="1">CTPSs have evolved a hybrid strategy for distinguishing between UTP and CTP. The overlapping regions of the product feedback inhibitory and substrate sites recognize a common feature in both compounds, the triphosphate moiety. To differentiate isosteric substrate and product pyrimidine rings, an additional pocket far from the expected kinase/ligase catalytic site, specifically recognizes the cytosine and ribose portions of the product inhibitor.</text>
</comment>
<comment type="similarity">
    <text evidence="1">Belongs to the CTP synthase family.</text>
</comment>
<keyword id="KW-0067">ATP-binding</keyword>
<keyword id="KW-0315">Glutamine amidotransferase</keyword>
<keyword id="KW-0436">Ligase</keyword>
<keyword id="KW-0460">Magnesium</keyword>
<keyword id="KW-0479">Metal-binding</keyword>
<keyword id="KW-0547">Nucleotide-binding</keyword>
<keyword id="KW-0665">Pyrimidine biosynthesis</keyword>
<evidence type="ECO:0000255" key="1">
    <source>
        <dbReference type="HAMAP-Rule" id="MF_01227"/>
    </source>
</evidence>
<protein>
    <recommendedName>
        <fullName evidence="1">CTP synthase</fullName>
        <ecNumber evidence="1">6.3.4.2</ecNumber>
    </recommendedName>
    <alternativeName>
        <fullName evidence="1">Cytidine 5'-triphosphate synthase</fullName>
    </alternativeName>
    <alternativeName>
        <fullName evidence="1">Cytidine triphosphate synthetase</fullName>
        <shortName evidence="1">CTP synthetase</shortName>
        <shortName evidence="1">CTPS</shortName>
    </alternativeName>
    <alternativeName>
        <fullName evidence="1">UTP--ammonia ligase</fullName>
    </alternativeName>
</protein>
<feature type="chain" id="PRO_1000139356" description="CTP synthase">
    <location>
        <begin position="1"/>
        <end position="545"/>
    </location>
</feature>
<feature type="domain" description="Glutamine amidotransferase type-1" evidence="1">
    <location>
        <begin position="292"/>
        <end position="543"/>
    </location>
</feature>
<feature type="region of interest" description="Amidoligase domain" evidence="1">
    <location>
        <begin position="1"/>
        <end position="266"/>
    </location>
</feature>
<feature type="active site" description="Nucleophile; for glutamine hydrolysis" evidence="1">
    <location>
        <position position="380"/>
    </location>
</feature>
<feature type="active site" evidence="1">
    <location>
        <position position="516"/>
    </location>
</feature>
<feature type="active site" evidence="1">
    <location>
        <position position="518"/>
    </location>
</feature>
<feature type="binding site" evidence="1">
    <location>
        <position position="13"/>
    </location>
    <ligand>
        <name>CTP</name>
        <dbReference type="ChEBI" id="CHEBI:37563"/>
        <note>allosteric inhibitor</note>
    </ligand>
</feature>
<feature type="binding site" evidence="1">
    <location>
        <position position="13"/>
    </location>
    <ligand>
        <name>UTP</name>
        <dbReference type="ChEBI" id="CHEBI:46398"/>
    </ligand>
</feature>
<feature type="binding site" evidence="1">
    <location>
        <begin position="14"/>
        <end position="19"/>
    </location>
    <ligand>
        <name>ATP</name>
        <dbReference type="ChEBI" id="CHEBI:30616"/>
    </ligand>
</feature>
<feature type="binding site" evidence="1">
    <location>
        <position position="71"/>
    </location>
    <ligand>
        <name>ATP</name>
        <dbReference type="ChEBI" id="CHEBI:30616"/>
    </ligand>
</feature>
<feature type="binding site" evidence="1">
    <location>
        <position position="71"/>
    </location>
    <ligand>
        <name>Mg(2+)</name>
        <dbReference type="ChEBI" id="CHEBI:18420"/>
    </ligand>
</feature>
<feature type="binding site" evidence="1">
    <location>
        <position position="140"/>
    </location>
    <ligand>
        <name>Mg(2+)</name>
        <dbReference type="ChEBI" id="CHEBI:18420"/>
    </ligand>
</feature>
<feature type="binding site" evidence="1">
    <location>
        <begin position="147"/>
        <end position="149"/>
    </location>
    <ligand>
        <name>CTP</name>
        <dbReference type="ChEBI" id="CHEBI:37563"/>
        <note>allosteric inhibitor</note>
    </ligand>
</feature>
<feature type="binding site" evidence="1">
    <location>
        <begin position="187"/>
        <end position="192"/>
    </location>
    <ligand>
        <name>CTP</name>
        <dbReference type="ChEBI" id="CHEBI:37563"/>
        <note>allosteric inhibitor</note>
    </ligand>
</feature>
<feature type="binding site" evidence="1">
    <location>
        <begin position="187"/>
        <end position="192"/>
    </location>
    <ligand>
        <name>UTP</name>
        <dbReference type="ChEBI" id="CHEBI:46398"/>
    </ligand>
</feature>
<feature type="binding site" evidence="1">
    <location>
        <position position="223"/>
    </location>
    <ligand>
        <name>CTP</name>
        <dbReference type="ChEBI" id="CHEBI:37563"/>
        <note>allosteric inhibitor</note>
    </ligand>
</feature>
<feature type="binding site" evidence="1">
    <location>
        <position position="223"/>
    </location>
    <ligand>
        <name>UTP</name>
        <dbReference type="ChEBI" id="CHEBI:46398"/>
    </ligand>
</feature>
<feature type="binding site" evidence="1">
    <location>
        <begin position="239"/>
        <end position="241"/>
    </location>
    <ligand>
        <name>ATP</name>
        <dbReference type="ChEBI" id="CHEBI:30616"/>
    </ligand>
</feature>
<feature type="binding site" evidence="1">
    <location>
        <position position="353"/>
    </location>
    <ligand>
        <name>L-glutamine</name>
        <dbReference type="ChEBI" id="CHEBI:58359"/>
    </ligand>
</feature>
<feature type="binding site" evidence="1">
    <location>
        <begin position="381"/>
        <end position="384"/>
    </location>
    <ligand>
        <name>L-glutamine</name>
        <dbReference type="ChEBI" id="CHEBI:58359"/>
    </ligand>
</feature>
<feature type="binding site" evidence="1">
    <location>
        <position position="404"/>
    </location>
    <ligand>
        <name>L-glutamine</name>
        <dbReference type="ChEBI" id="CHEBI:58359"/>
    </ligand>
</feature>
<feature type="binding site" evidence="1">
    <location>
        <position position="471"/>
    </location>
    <ligand>
        <name>L-glutamine</name>
        <dbReference type="ChEBI" id="CHEBI:58359"/>
    </ligand>
</feature>
<accession>B7I920</accession>
<reference key="1">
    <citation type="journal article" date="2008" name="J. Bacteriol.">
        <title>Comparative genome sequence analysis of multidrug-resistant Acinetobacter baumannii.</title>
        <authorList>
            <person name="Adams M.D."/>
            <person name="Goglin K."/>
            <person name="Molyneaux N."/>
            <person name="Hujer K.M."/>
            <person name="Lavender H."/>
            <person name="Jamison J.J."/>
            <person name="MacDonald I.J."/>
            <person name="Martin K.M."/>
            <person name="Russo T."/>
            <person name="Campagnari A.A."/>
            <person name="Hujer A.M."/>
            <person name="Bonomo R.A."/>
            <person name="Gill S.R."/>
        </authorList>
    </citation>
    <scope>NUCLEOTIDE SEQUENCE [LARGE SCALE GENOMIC DNA]</scope>
    <source>
        <strain>AB0057</strain>
    </source>
</reference>
<proteinExistence type="inferred from homology"/>
<name>PYRG_ACIB5</name>
<dbReference type="EC" id="6.3.4.2" evidence="1"/>
<dbReference type="EMBL" id="CP001182">
    <property type="protein sequence ID" value="ACJ41605.1"/>
    <property type="molecule type" value="Genomic_DNA"/>
</dbReference>
<dbReference type="RefSeq" id="WP_000148658.1">
    <property type="nucleotide sequence ID" value="NC_011586.2"/>
</dbReference>
<dbReference type="SMR" id="B7I920"/>
<dbReference type="KEGG" id="abn:AB57_06495"/>
<dbReference type="HOGENOM" id="CLU_011675_5_0_6"/>
<dbReference type="UniPathway" id="UPA00159">
    <property type="reaction ID" value="UER00277"/>
</dbReference>
<dbReference type="Proteomes" id="UP000007094">
    <property type="component" value="Chromosome"/>
</dbReference>
<dbReference type="GO" id="GO:0005829">
    <property type="term" value="C:cytosol"/>
    <property type="evidence" value="ECO:0007669"/>
    <property type="project" value="TreeGrafter"/>
</dbReference>
<dbReference type="GO" id="GO:0005524">
    <property type="term" value="F:ATP binding"/>
    <property type="evidence" value="ECO:0007669"/>
    <property type="project" value="UniProtKB-KW"/>
</dbReference>
<dbReference type="GO" id="GO:0003883">
    <property type="term" value="F:CTP synthase activity"/>
    <property type="evidence" value="ECO:0007669"/>
    <property type="project" value="UniProtKB-UniRule"/>
</dbReference>
<dbReference type="GO" id="GO:0004359">
    <property type="term" value="F:glutaminase activity"/>
    <property type="evidence" value="ECO:0007669"/>
    <property type="project" value="RHEA"/>
</dbReference>
<dbReference type="GO" id="GO:0042802">
    <property type="term" value="F:identical protein binding"/>
    <property type="evidence" value="ECO:0007669"/>
    <property type="project" value="TreeGrafter"/>
</dbReference>
<dbReference type="GO" id="GO:0046872">
    <property type="term" value="F:metal ion binding"/>
    <property type="evidence" value="ECO:0007669"/>
    <property type="project" value="UniProtKB-KW"/>
</dbReference>
<dbReference type="GO" id="GO:0044210">
    <property type="term" value="P:'de novo' CTP biosynthetic process"/>
    <property type="evidence" value="ECO:0007669"/>
    <property type="project" value="UniProtKB-UniRule"/>
</dbReference>
<dbReference type="GO" id="GO:0019856">
    <property type="term" value="P:pyrimidine nucleobase biosynthetic process"/>
    <property type="evidence" value="ECO:0007669"/>
    <property type="project" value="TreeGrafter"/>
</dbReference>
<dbReference type="CDD" id="cd03113">
    <property type="entry name" value="CTPS_N"/>
    <property type="match status" value="1"/>
</dbReference>
<dbReference type="CDD" id="cd01746">
    <property type="entry name" value="GATase1_CTP_Synthase"/>
    <property type="match status" value="1"/>
</dbReference>
<dbReference type="FunFam" id="3.40.50.300:FF:000009">
    <property type="entry name" value="CTP synthase"/>
    <property type="match status" value="1"/>
</dbReference>
<dbReference type="FunFam" id="3.40.50.880:FF:000002">
    <property type="entry name" value="CTP synthase"/>
    <property type="match status" value="1"/>
</dbReference>
<dbReference type="Gene3D" id="3.40.50.880">
    <property type="match status" value="1"/>
</dbReference>
<dbReference type="Gene3D" id="3.40.50.300">
    <property type="entry name" value="P-loop containing nucleotide triphosphate hydrolases"/>
    <property type="match status" value="1"/>
</dbReference>
<dbReference type="HAMAP" id="MF_01227">
    <property type="entry name" value="PyrG"/>
    <property type="match status" value="1"/>
</dbReference>
<dbReference type="InterPro" id="IPR029062">
    <property type="entry name" value="Class_I_gatase-like"/>
</dbReference>
<dbReference type="InterPro" id="IPR004468">
    <property type="entry name" value="CTP_synthase"/>
</dbReference>
<dbReference type="InterPro" id="IPR017456">
    <property type="entry name" value="CTP_synthase_N"/>
</dbReference>
<dbReference type="InterPro" id="IPR017926">
    <property type="entry name" value="GATASE"/>
</dbReference>
<dbReference type="InterPro" id="IPR033828">
    <property type="entry name" value="GATase1_CTP_Synthase"/>
</dbReference>
<dbReference type="InterPro" id="IPR027417">
    <property type="entry name" value="P-loop_NTPase"/>
</dbReference>
<dbReference type="NCBIfam" id="NF003792">
    <property type="entry name" value="PRK05380.1"/>
    <property type="match status" value="1"/>
</dbReference>
<dbReference type="NCBIfam" id="TIGR00337">
    <property type="entry name" value="PyrG"/>
    <property type="match status" value="1"/>
</dbReference>
<dbReference type="PANTHER" id="PTHR11550">
    <property type="entry name" value="CTP SYNTHASE"/>
    <property type="match status" value="1"/>
</dbReference>
<dbReference type="PANTHER" id="PTHR11550:SF0">
    <property type="entry name" value="CTP SYNTHASE-RELATED"/>
    <property type="match status" value="1"/>
</dbReference>
<dbReference type="Pfam" id="PF06418">
    <property type="entry name" value="CTP_synth_N"/>
    <property type="match status" value="1"/>
</dbReference>
<dbReference type="Pfam" id="PF00117">
    <property type="entry name" value="GATase"/>
    <property type="match status" value="1"/>
</dbReference>
<dbReference type="SUPFAM" id="SSF52317">
    <property type="entry name" value="Class I glutamine amidotransferase-like"/>
    <property type="match status" value="1"/>
</dbReference>
<dbReference type="SUPFAM" id="SSF52540">
    <property type="entry name" value="P-loop containing nucleoside triphosphate hydrolases"/>
    <property type="match status" value="1"/>
</dbReference>
<dbReference type="PROSITE" id="PS51273">
    <property type="entry name" value="GATASE_TYPE_1"/>
    <property type="match status" value="1"/>
</dbReference>
<gene>
    <name evidence="1" type="primary">pyrG</name>
    <name type="ordered locus">AB57_2232</name>
</gene>
<organism>
    <name type="scientific">Acinetobacter baumannii (strain AB0057)</name>
    <dbReference type="NCBI Taxonomy" id="480119"/>
    <lineage>
        <taxon>Bacteria</taxon>
        <taxon>Pseudomonadati</taxon>
        <taxon>Pseudomonadota</taxon>
        <taxon>Gammaproteobacteria</taxon>
        <taxon>Moraxellales</taxon>
        <taxon>Moraxellaceae</taxon>
        <taxon>Acinetobacter</taxon>
        <taxon>Acinetobacter calcoaceticus/baumannii complex</taxon>
    </lineage>
</organism>